<gene>
    <name evidence="1" type="primary">kup</name>
    <name type="ordered locus">Sez_0647</name>
</gene>
<dbReference type="EMBL" id="CP001129">
    <property type="protein sequence ID" value="ACG62014.1"/>
    <property type="molecule type" value="Genomic_DNA"/>
</dbReference>
<dbReference type="RefSeq" id="WP_012515290.1">
    <property type="nucleotide sequence ID" value="NC_011134.1"/>
</dbReference>
<dbReference type="KEGG" id="sez:Sez_0647"/>
<dbReference type="HOGENOM" id="CLU_008142_4_1_9"/>
<dbReference type="Proteomes" id="UP000001873">
    <property type="component" value="Chromosome"/>
</dbReference>
<dbReference type="GO" id="GO:0005886">
    <property type="term" value="C:plasma membrane"/>
    <property type="evidence" value="ECO:0007669"/>
    <property type="project" value="UniProtKB-SubCell"/>
</dbReference>
<dbReference type="GO" id="GO:0015079">
    <property type="term" value="F:potassium ion transmembrane transporter activity"/>
    <property type="evidence" value="ECO:0007669"/>
    <property type="project" value="UniProtKB-UniRule"/>
</dbReference>
<dbReference type="GO" id="GO:0015293">
    <property type="term" value="F:symporter activity"/>
    <property type="evidence" value="ECO:0007669"/>
    <property type="project" value="UniProtKB-UniRule"/>
</dbReference>
<dbReference type="HAMAP" id="MF_01522">
    <property type="entry name" value="Kup"/>
    <property type="match status" value="1"/>
</dbReference>
<dbReference type="InterPro" id="IPR003855">
    <property type="entry name" value="K+_transporter"/>
</dbReference>
<dbReference type="InterPro" id="IPR053952">
    <property type="entry name" value="K_trans_C"/>
</dbReference>
<dbReference type="InterPro" id="IPR053951">
    <property type="entry name" value="K_trans_N"/>
</dbReference>
<dbReference type="InterPro" id="IPR023051">
    <property type="entry name" value="Kup"/>
</dbReference>
<dbReference type="PANTHER" id="PTHR30540:SF83">
    <property type="entry name" value="K+ POTASSIUM TRANSPORTER"/>
    <property type="match status" value="1"/>
</dbReference>
<dbReference type="PANTHER" id="PTHR30540">
    <property type="entry name" value="OSMOTIC STRESS POTASSIUM TRANSPORTER"/>
    <property type="match status" value="1"/>
</dbReference>
<dbReference type="Pfam" id="PF02705">
    <property type="entry name" value="K_trans"/>
    <property type="match status" value="1"/>
</dbReference>
<dbReference type="Pfam" id="PF22776">
    <property type="entry name" value="K_trans_C"/>
    <property type="match status" value="1"/>
</dbReference>
<sequence length="667" mass="74197">MSNAHHDAFDKATKAGFIIALGIVYGDIGTSPLYTMQSLVDNQGGLSQVSEAFILGSVSLIIWTLTLITTIKYVLIALKADNHHEGGIFSLFTLVRRMSRWLIIPAMLGGATLLSDGALTPAVTVTSAIEGLKAVPELSSIYQNQTNVILTTLLILMVLFGLQRFGTGVIGKLFGPVMLVWFSVLGISGLLNSLQHLEILKAINPYYALHLLVSPENHRGIFILGSIFLATTGAEALYSDLGHVGRGNIYASWPFVKVCIILSYCGQAAWILAHKDSGIALNPFFASVPEGLRVYLVILATLAAIIASQALISGSFTLVSEAMRLKIFPLFKITYPGANLGQLYIPVINWSLFAVTSCTVLYFRTSAHMEAAYGLAITITMLMTTILLAYYLIKEGVKPLLASLLMAFFAFIEFIFFLASAVKFMHGGYVVVVLALAIVFVMVIWHAGTVIVAKYVKSLSLNDYKHQIKLLRDDLRFDLYQTNVVYLTNRMKKDLIDRSILYSILDKRPKRAQVYWFVNVRVTDEPYTATYKVDMLGTDYIVCVELYLGFRMPQTVPRYLRTIVQDLMESGRLPKQVQDYTITPGREVGDFRFVIIEERVSHARQLSTLERFVMQTKASIKHVTASPMRWFGLQYSEATVEVVPLLLSDVLKLPIKEIKACTKDEKA</sequence>
<organism>
    <name type="scientific">Streptococcus equi subsp. zooepidemicus (strain MGCS10565)</name>
    <dbReference type="NCBI Taxonomy" id="552526"/>
    <lineage>
        <taxon>Bacteria</taxon>
        <taxon>Bacillati</taxon>
        <taxon>Bacillota</taxon>
        <taxon>Bacilli</taxon>
        <taxon>Lactobacillales</taxon>
        <taxon>Streptococcaceae</taxon>
        <taxon>Streptococcus</taxon>
    </lineage>
</organism>
<proteinExistence type="inferred from homology"/>
<keyword id="KW-1003">Cell membrane</keyword>
<keyword id="KW-0406">Ion transport</keyword>
<keyword id="KW-0472">Membrane</keyword>
<keyword id="KW-0630">Potassium</keyword>
<keyword id="KW-0633">Potassium transport</keyword>
<keyword id="KW-0769">Symport</keyword>
<keyword id="KW-0812">Transmembrane</keyword>
<keyword id="KW-1133">Transmembrane helix</keyword>
<keyword id="KW-0813">Transport</keyword>
<evidence type="ECO:0000255" key="1">
    <source>
        <dbReference type="HAMAP-Rule" id="MF_01522"/>
    </source>
</evidence>
<name>KUP_STREM</name>
<comment type="function">
    <text evidence="1">Transport of potassium into the cell. Likely operates as a K(+):H(+) symporter.</text>
</comment>
<comment type="catalytic activity">
    <reaction evidence="1">
        <text>K(+)(in) + H(+)(in) = K(+)(out) + H(+)(out)</text>
        <dbReference type="Rhea" id="RHEA:28490"/>
        <dbReference type="ChEBI" id="CHEBI:15378"/>
        <dbReference type="ChEBI" id="CHEBI:29103"/>
    </reaction>
    <physiologicalReaction direction="right-to-left" evidence="1">
        <dbReference type="Rhea" id="RHEA:28492"/>
    </physiologicalReaction>
</comment>
<comment type="subcellular location">
    <subcellularLocation>
        <location evidence="1">Cell membrane</location>
        <topology evidence="1">Multi-pass membrane protein</topology>
    </subcellularLocation>
</comment>
<comment type="similarity">
    <text evidence="1">Belongs to the HAK/KUP transporter (TC 2.A.72) family.</text>
</comment>
<feature type="chain" id="PRO_1000190285" description="Probable potassium transport system protein Kup">
    <location>
        <begin position="1"/>
        <end position="667"/>
    </location>
</feature>
<feature type="transmembrane region" description="Helical" evidence="1">
    <location>
        <begin position="16"/>
        <end position="36"/>
    </location>
</feature>
<feature type="transmembrane region" description="Helical" evidence="1">
    <location>
        <begin position="58"/>
        <end position="78"/>
    </location>
</feature>
<feature type="transmembrane region" description="Helical" evidence="1">
    <location>
        <begin position="101"/>
        <end position="121"/>
    </location>
</feature>
<feature type="transmembrane region" description="Helical" evidence="1">
    <location>
        <begin position="146"/>
        <end position="166"/>
    </location>
</feature>
<feature type="transmembrane region" description="Helical" evidence="1">
    <location>
        <begin position="167"/>
        <end position="187"/>
    </location>
</feature>
<feature type="transmembrane region" description="Helical" evidence="1">
    <location>
        <begin position="221"/>
        <end position="241"/>
    </location>
</feature>
<feature type="transmembrane region" description="Helical" evidence="1">
    <location>
        <begin position="253"/>
        <end position="273"/>
    </location>
</feature>
<feature type="transmembrane region" description="Helical" evidence="1">
    <location>
        <begin position="294"/>
        <end position="314"/>
    </location>
</feature>
<feature type="transmembrane region" description="Helical" evidence="1">
    <location>
        <begin position="343"/>
        <end position="363"/>
    </location>
</feature>
<feature type="transmembrane region" description="Helical" evidence="1">
    <location>
        <begin position="373"/>
        <end position="393"/>
    </location>
</feature>
<feature type="transmembrane region" description="Helical" evidence="1">
    <location>
        <begin position="399"/>
        <end position="419"/>
    </location>
</feature>
<feature type="transmembrane region" description="Helical" evidence="1">
    <location>
        <begin position="431"/>
        <end position="451"/>
    </location>
</feature>
<protein>
    <recommendedName>
        <fullName evidence="1">Probable potassium transport system protein Kup</fullName>
    </recommendedName>
</protein>
<reference key="1">
    <citation type="journal article" date="2008" name="PLoS ONE">
        <title>Genome sequence of a lancefield group C Streptococcus zooepidemicus strain causing epidemic nephritis: new information about an old disease.</title>
        <authorList>
            <person name="Beres S.B."/>
            <person name="Sesso R."/>
            <person name="Pinto S.W.L."/>
            <person name="Hoe N.P."/>
            <person name="Porcella S.F."/>
            <person name="Deleo F.R."/>
            <person name="Musser J.M."/>
        </authorList>
    </citation>
    <scope>NUCLEOTIDE SEQUENCE [LARGE SCALE GENOMIC DNA]</scope>
    <source>
        <strain>MGCS10565</strain>
    </source>
</reference>
<accession>B4U1Z7</accession>